<accession>Q1IDN4</accession>
<reference key="1">
    <citation type="journal article" date="2006" name="Nat. Biotechnol.">
        <title>Complete genome sequence of the entomopathogenic and metabolically versatile soil bacterium Pseudomonas entomophila.</title>
        <authorList>
            <person name="Vodovar N."/>
            <person name="Vallenet D."/>
            <person name="Cruveiller S."/>
            <person name="Rouy Z."/>
            <person name="Barbe V."/>
            <person name="Acosta C."/>
            <person name="Cattolico L."/>
            <person name="Jubin C."/>
            <person name="Lajus A."/>
            <person name="Segurens B."/>
            <person name="Vacherie B."/>
            <person name="Wincker P."/>
            <person name="Weissenbach J."/>
            <person name="Lemaitre B."/>
            <person name="Medigue C."/>
            <person name="Boccard F."/>
        </authorList>
    </citation>
    <scope>NUCLEOTIDE SEQUENCE [LARGE SCALE GENOMIC DNA]</scope>
    <source>
        <strain>L48</strain>
    </source>
</reference>
<proteinExistence type="inferred from homology"/>
<keyword id="KW-0963">Cytoplasm</keyword>
<keyword id="KW-0479">Metal-binding</keyword>
<keyword id="KW-0862">Zinc</keyword>
<sequence length="164" mass="19728">MPELLKQRVETCYQQAETFFKRPFPRPQVSFKLRGQKAGVAHLHENLLRFNLQLYRENQDDFLRQTVAHEVAHLVAHQLFGDKIQAHGEEWQLIMRGVYELPPNRCHNYEVQRRVATRYIYRCPCPESDFPFTAQRHKLVRQGRRYLCRRCREILVYSGETRVE</sequence>
<comment type="cofactor">
    <cofactor evidence="1">
        <name>Zn(2+)</name>
        <dbReference type="ChEBI" id="CHEBI:29105"/>
    </cofactor>
    <text evidence="1">Binds 1 zinc ion.</text>
</comment>
<comment type="subcellular location">
    <subcellularLocation>
        <location evidence="1">Cytoplasm</location>
    </subcellularLocation>
</comment>
<comment type="similarity">
    <text evidence="1">Belongs to the SprT family.</text>
</comment>
<protein>
    <recommendedName>
        <fullName evidence="1">Protein SprT</fullName>
    </recommendedName>
</protein>
<feature type="chain" id="PRO_1000046533" description="Protein SprT">
    <location>
        <begin position="1"/>
        <end position="164"/>
    </location>
</feature>
<feature type="domain" description="SprT-like" evidence="1">
    <location>
        <begin position="14"/>
        <end position="156"/>
    </location>
</feature>
<feature type="active site" evidence="1">
    <location>
        <position position="70"/>
    </location>
</feature>
<feature type="binding site" evidence="1">
    <location>
        <position position="69"/>
    </location>
    <ligand>
        <name>Zn(2+)</name>
        <dbReference type="ChEBI" id="CHEBI:29105"/>
    </ligand>
</feature>
<feature type="binding site" evidence="1">
    <location>
        <position position="73"/>
    </location>
    <ligand>
        <name>Zn(2+)</name>
        <dbReference type="ChEBI" id="CHEBI:29105"/>
    </ligand>
</feature>
<evidence type="ECO:0000255" key="1">
    <source>
        <dbReference type="HAMAP-Rule" id="MF_00746"/>
    </source>
</evidence>
<dbReference type="EMBL" id="CT573326">
    <property type="protein sequence ID" value="CAK14225.1"/>
    <property type="molecule type" value="Genomic_DNA"/>
</dbReference>
<dbReference type="RefSeq" id="WP_011532641.1">
    <property type="nucleotide sequence ID" value="NC_008027.1"/>
</dbReference>
<dbReference type="STRING" id="384676.PSEEN1348"/>
<dbReference type="GeneID" id="32804612"/>
<dbReference type="KEGG" id="pen:PSEEN1348"/>
<dbReference type="eggNOG" id="COG3091">
    <property type="taxonomic scope" value="Bacteria"/>
</dbReference>
<dbReference type="HOGENOM" id="CLU_113336_0_1_6"/>
<dbReference type="OrthoDB" id="267364at2"/>
<dbReference type="Proteomes" id="UP000000658">
    <property type="component" value="Chromosome"/>
</dbReference>
<dbReference type="GO" id="GO:0005737">
    <property type="term" value="C:cytoplasm"/>
    <property type="evidence" value="ECO:0007669"/>
    <property type="project" value="UniProtKB-SubCell"/>
</dbReference>
<dbReference type="GO" id="GO:0008270">
    <property type="term" value="F:zinc ion binding"/>
    <property type="evidence" value="ECO:0007669"/>
    <property type="project" value="UniProtKB-UniRule"/>
</dbReference>
<dbReference type="GO" id="GO:0006950">
    <property type="term" value="P:response to stress"/>
    <property type="evidence" value="ECO:0007669"/>
    <property type="project" value="UniProtKB-ARBA"/>
</dbReference>
<dbReference type="HAMAP" id="MF_00746">
    <property type="entry name" value="SprT"/>
    <property type="match status" value="1"/>
</dbReference>
<dbReference type="InterPro" id="IPR006640">
    <property type="entry name" value="SprT-like_domain"/>
</dbReference>
<dbReference type="InterPro" id="IPR023483">
    <property type="entry name" value="Uncharacterised_SprT"/>
</dbReference>
<dbReference type="NCBIfam" id="NF003421">
    <property type="entry name" value="PRK04860.1"/>
    <property type="match status" value="1"/>
</dbReference>
<dbReference type="PANTHER" id="PTHR38773">
    <property type="entry name" value="PROTEIN SPRT"/>
    <property type="match status" value="1"/>
</dbReference>
<dbReference type="PANTHER" id="PTHR38773:SF1">
    <property type="entry name" value="PROTEIN SPRT"/>
    <property type="match status" value="1"/>
</dbReference>
<dbReference type="Pfam" id="PF10263">
    <property type="entry name" value="SprT-like"/>
    <property type="match status" value="1"/>
</dbReference>
<dbReference type="SMART" id="SM00731">
    <property type="entry name" value="SprT"/>
    <property type="match status" value="1"/>
</dbReference>
<dbReference type="PROSITE" id="PS00142">
    <property type="entry name" value="ZINC_PROTEASE"/>
    <property type="match status" value="1"/>
</dbReference>
<name>SPRT_PSEE4</name>
<organism>
    <name type="scientific">Pseudomonas entomophila (strain L48)</name>
    <dbReference type="NCBI Taxonomy" id="384676"/>
    <lineage>
        <taxon>Bacteria</taxon>
        <taxon>Pseudomonadati</taxon>
        <taxon>Pseudomonadota</taxon>
        <taxon>Gammaproteobacteria</taxon>
        <taxon>Pseudomonadales</taxon>
        <taxon>Pseudomonadaceae</taxon>
        <taxon>Pseudomonas</taxon>
    </lineage>
</organism>
<gene>
    <name evidence="1" type="primary">sprT</name>
    <name type="ordered locus">PSEEN1348</name>
</gene>